<reference key="1">
    <citation type="journal article" date="2010" name="Genome Biol. Evol.">
        <title>Continuing evolution of Burkholderia mallei through genome reduction and large-scale rearrangements.</title>
        <authorList>
            <person name="Losada L."/>
            <person name="Ronning C.M."/>
            <person name="DeShazer D."/>
            <person name="Woods D."/>
            <person name="Fedorova N."/>
            <person name="Kim H.S."/>
            <person name="Shabalina S.A."/>
            <person name="Pearson T.R."/>
            <person name="Brinkac L."/>
            <person name="Tan P."/>
            <person name="Nandi T."/>
            <person name="Crabtree J."/>
            <person name="Badger J."/>
            <person name="Beckstrom-Sternberg S."/>
            <person name="Saqib M."/>
            <person name="Schutzer S.E."/>
            <person name="Keim P."/>
            <person name="Nierman W.C."/>
        </authorList>
    </citation>
    <scope>NUCLEOTIDE SEQUENCE [LARGE SCALE GENOMIC DNA]</scope>
    <source>
        <strain>NCTC 10247</strain>
    </source>
</reference>
<feature type="chain" id="PRO_0000358374" description="NADH-quinone oxidoreductase subunit B 2">
    <location>
        <begin position="1"/>
        <end position="167"/>
    </location>
</feature>
<feature type="binding site" evidence="2">
    <location>
        <position position="39"/>
    </location>
    <ligand>
        <name>[4Fe-4S] cluster</name>
        <dbReference type="ChEBI" id="CHEBI:49883"/>
    </ligand>
</feature>
<feature type="binding site" evidence="2">
    <location>
        <position position="40"/>
    </location>
    <ligand>
        <name>[4Fe-4S] cluster</name>
        <dbReference type="ChEBI" id="CHEBI:49883"/>
    </ligand>
</feature>
<feature type="binding site" evidence="2">
    <location>
        <position position="104"/>
    </location>
    <ligand>
        <name>[4Fe-4S] cluster</name>
        <dbReference type="ChEBI" id="CHEBI:49883"/>
    </ligand>
</feature>
<feature type="binding site" evidence="2">
    <location>
        <position position="134"/>
    </location>
    <ligand>
        <name>[4Fe-4S] cluster</name>
        <dbReference type="ChEBI" id="CHEBI:49883"/>
    </ligand>
</feature>
<proteinExistence type="inferred from homology"/>
<evidence type="ECO:0000250" key="1"/>
<evidence type="ECO:0000255" key="2">
    <source>
        <dbReference type="HAMAP-Rule" id="MF_01356"/>
    </source>
</evidence>
<evidence type="ECO:0000305" key="3"/>
<gene>
    <name evidence="2" type="primary">nuoB2</name>
    <name type="ordered locus">BMA10247_A1924</name>
</gene>
<keyword id="KW-0004">4Fe-4S</keyword>
<keyword id="KW-0997">Cell inner membrane</keyword>
<keyword id="KW-1003">Cell membrane</keyword>
<keyword id="KW-0408">Iron</keyword>
<keyword id="KW-0411">Iron-sulfur</keyword>
<keyword id="KW-0472">Membrane</keyword>
<keyword id="KW-0479">Metal-binding</keyword>
<keyword id="KW-0520">NAD</keyword>
<keyword id="KW-0874">Quinone</keyword>
<keyword id="KW-1278">Translocase</keyword>
<keyword id="KW-0813">Transport</keyword>
<keyword id="KW-0830">Ubiquinone</keyword>
<sequence length="167" mass="18469">MANHPLTLEKDGFIVTTLDAAMAAAQKNSLWYMTFGLACCAVEMMHAAGARYDMDRFGMIPRASPRQCDLMIVAGTLTNKMAPAMRRVYDQMAEPRYVVSMGSCANGGGYYHYSYSVVRGCDRIVPVDVYVPGCPPTAEALVYGLMQLQRKVAERSTHSRPKLFARP</sequence>
<accession>A3MFR5</accession>
<protein>
    <recommendedName>
        <fullName evidence="2">NADH-quinone oxidoreductase subunit B 2</fullName>
        <ecNumber evidence="2">7.1.1.-</ecNumber>
    </recommendedName>
    <alternativeName>
        <fullName evidence="2">NADH dehydrogenase I subunit B 2</fullName>
    </alternativeName>
    <alternativeName>
        <fullName evidence="2">NDH-1 subunit B 2</fullName>
    </alternativeName>
</protein>
<comment type="function">
    <text evidence="1">NDH-1 shuttles electrons from NADH, via FMN and iron-sulfur (Fe-S) centers, to quinones in the respiratory chain. Couples the redox reaction to proton translocation (for every two electrons transferred, four hydrogen ions are translocated across the cytoplasmic membrane), and thus conserves the redox energy in a proton gradient (By similarity).</text>
</comment>
<comment type="catalytic activity">
    <reaction evidence="2">
        <text>a quinone + NADH + 5 H(+)(in) = a quinol + NAD(+) + 4 H(+)(out)</text>
        <dbReference type="Rhea" id="RHEA:57888"/>
        <dbReference type="ChEBI" id="CHEBI:15378"/>
        <dbReference type="ChEBI" id="CHEBI:24646"/>
        <dbReference type="ChEBI" id="CHEBI:57540"/>
        <dbReference type="ChEBI" id="CHEBI:57945"/>
        <dbReference type="ChEBI" id="CHEBI:132124"/>
    </reaction>
</comment>
<comment type="cofactor">
    <cofactor evidence="2">
        <name>[4Fe-4S] cluster</name>
        <dbReference type="ChEBI" id="CHEBI:49883"/>
    </cofactor>
    <text evidence="2">Binds 1 [4Fe-4S] cluster.</text>
</comment>
<comment type="subunit">
    <text evidence="2">NDH-1 is composed of 14 different subunits. Subunits NuoB, C, D, E, F, and G constitute the peripheral sector of the complex.</text>
</comment>
<comment type="subcellular location">
    <subcellularLocation>
        <location evidence="2">Cell inner membrane</location>
        <topology evidence="2">Peripheral membrane protein</topology>
        <orientation evidence="2">Cytoplasmic side</orientation>
    </subcellularLocation>
</comment>
<comment type="similarity">
    <text evidence="2">Belongs to the complex I 20 kDa subunit family.</text>
</comment>
<comment type="sequence caution" evidence="3">
    <conflict type="erroneous initiation">
        <sequence resource="EMBL-CDS" id="ABO03025"/>
    </conflict>
</comment>
<name>NUOB2_BURM7</name>
<organism>
    <name type="scientific">Burkholderia mallei (strain NCTC 10247)</name>
    <dbReference type="NCBI Taxonomy" id="320389"/>
    <lineage>
        <taxon>Bacteria</taxon>
        <taxon>Pseudomonadati</taxon>
        <taxon>Pseudomonadota</taxon>
        <taxon>Betaproteobacteria</taxon>
        <taxon>Burkholderiales</taxon>
        <taxon>Burkholderiaceae</taxon>
        <taxon>Burkholderia</taxon>
        <taxon>pseudomallei group</taxon>
    </lineage>
</organism>
<dbReference type="EC" id="7.1.1.-" evidence="2"/>
<dbReference type="EMBL" id="CP000547">
    <property type="protein sequence ID" value="ABO03025.1"/>
    <property type="status" value="ALT_INIT"/>
    <property type="molecule type" value="Genomic_DNA"/>
</dbReference>
<dbReference type="RefSeq" id="WP_004186860.1">
    <property type="nucleotide sequence ID" value="NZ_CP007801.1"/>
</dbReference>
<dbReference type="SMR" id="A3MFR5"/>
<dbReference type="KEGG" id="bmaz:BM44_4060"/>
<dbReference type="KEGG" id="bmn:BMA10247_A1924"/>
<dbReference type="PATRIC" id="fig|320389.8.peg.4618"/>
<dbReference type="GO" id="GO:0005886">
    <property type="term" value="C:plasma membrane"/>
    <property type="evidence" value="ECO:0007669"/>
    <property type="project" value="UniProtKB-SubCell"/>
</dbReference>
<dbReference type="GO" id="GO:0045271">
    <property type="term" value="C:respiratory chain complex I"/>
    <property type="evidence" value="ECO:0007669"/>
    <property type="project" value="TreeGrafter"/>
</dbReference>
<dbReference type="GO" id="GO:0051539">
    <property type="term" value="F:4 iron, 4 sulfur cluster binding"/>
    <property type="evidence" value="ECO:0007669"/>
    <property type="project" value="UniProtKB-KW"/>
</dbReference>
<dbReference type="GO" id="GO:0005506">
    <property type="term" value="F:iron ion binding"/>
    <property type="evidence" value="ECO:0007669"/>
    <property type="project" value="UniProtKB-UniRule"/>
</dbReference>
<dbReference type="GO" id="GO:0008137">
    <property type="term" value="F:NADH dehydrogenase (ubiquinone) activity"/>
    <property type="evidence" value="ECO:0007669"/>
    <property type="project" value="InterPro"/>
</dbReference>
<dbReference type="GO" id="GO:0050136">
    <property type="term" value="F:NADH:ubiquinone reductase (non-electrogenic) activity"/>
    <property type="evidence" value="ECO:0007669"/>
    <property type="project" value="UniProtKB-UniRule"/>
</dbReference>
<dbReference type="GO" id="GO:0048038">
    <property type="term" value="F:quinone binding"/>
    <property type="evidence" value="ECO:0007669"/>
    <property type="project" value="UniProtKB-KW"/>
</dbReference>
<dbReference type="GO" id="GO:0009060">
    <property type="term" value="P:aerobic respiration"/>
    <property type="evidence" value="ECO:0007669"/>
    <property type="project" value="TreeGrafter"/>
</dbReference>
<dbReference type="GO" id="GO:0015990">
    <property type="term" value="P:electron transport coupled proton transport"/>
    <property type="evidence" value="ECO:0007669"/>
    <property type="project" value="TreeGrafter"/>
</dbReference>
<dbReference type="FunFam" id="3.40.50.12280:FF:000001">
    <property type="entry name" value="NADH-quinone oxidoreductase subunit B 2"/>
    <property type="match status" value="1"/>
</dbReference>
<dbReference type="Gene3D" id="3.40.50.12280">
    <property type="match status" value="1"/>
</dbReference>
<dbReference type="HAMAP" id="MF_01356">
    <property type="entry name" value="NDH1_NuoB"/>
    <property type="match status" value="1"/>
</dbReference>
<dbReference type="InterPro" id="IPR006137">
    <property type="entry name" value="NADH_UbQ_OxRdtase-like_20kDa"/>
</dbReference>
<dbReference type="InterPro" id="IPR006138">
    <property type="entry name" value="NADH_UQ_OxRdtase_20Kd_su"/>
</dbReference>
<dbReference type="NCBIfam" id="TIGR01957">
    <property type="entry name" value="nuoB_fam"/>
    <property type="match status" value="1"/>
</dbReference>
<dbReference type="NCBIfam" id="NF005012">
    <property type="entry name" value="PRK06411.1"/>
    <property type="match status" value="1"/>
</dbReference>
<dbReference type="PANTHER" id="PTHR11995">
    <property type="entry name" value="NADH DEHYDROGENASE"/>
    <property type="match status" value="1"/>
</dbReference>
<dbReference type="PANTHER" id="PTHR11995:SF14">
    <property type="entry name" value="NADH DEHYDROGENASE [UBIQUINONE] IRON-SULFUR PROTEIN 7, MITOCHONDRIAL"/>
    <property type="match status" value="1"/>
</dbReference>
<dbReference type="Pfam" id="PF01058">
    <property type="entry name" value="Oxidored_q6"/>
    <property type="match status" value="1"/>
</dbReference>
<dbReference type="SUPFAM" id="SSF56770">
    <property type="entry name" value="HydA/Nqo6-like"/>
    <property type="match status" value="1"/>
</dbReference>
<dbReference type="PROSITE" id="PS01150">
    <property type="entry name" value="COMPLEX1_20K"/>
    <property type="match status" value="1"/>
</dbReference>